<reference key="1">
    <citation type="journal article" date="1985" name="J. Mol. Biol.">
        <title>Sequence and structure of the serendipity locus of Drosophila melanogaster. A densely transcribed region including a blastoderm-specific gene.</title>
        <authorList>
            <person name="Vincent A."/>
            <person name="Colot H.V."/>
            <person name="Rosbash M."/>
        </authorList>
    </citation>
    <scope>NUCLEOTIDE SEQUENCE [GENOMIC DNA]</scope>
    <scope>DEVELOPMENTAL STAGE</scope>
    <source>
        <strain>Oregon-R</strain>
    </source>
</reference>
<reference key="2">
    <citation type="journal article" date="2000" name="Science">
        <title>The genome sequence of Drosophila melanogaster.</title>
        <authorList>
            <person name="Adams M.D."/>
            <person name="Celniker S.E."/>
            <person name="Holt R.A."/>
            <person name="Evans C.A."/>
            <person name="Gocayne J.D."/>
            <person name="Amanatides P.G."/>
            <person name="Scherer S.E."/>
            <person name="Li P.W."/>
            <person name="Hoskins R.A."/>
            <person name="Galle R.F."/>
            <person name="George R.A."/>
            <person name="Lewis S.E."/>
            <person name="Richards S."/>
            <person name="Ashburner M."/>
            <person name="Henderson S.N."/>
            <person name="Sutton G.G."/>
            <person name="Wortman J.R."/>
            <person name="Yandell M.D."/>
            <person name="Zhang Q."/>
            <person name="Chen L.X."/>
            <person name="Brandon R.C."/>
            <person name="Rogers Y.-H.C."/>
            <person name="Blazej R.G."/>
            <person name="Champe M."/>
            <person name="Pfeiffer B.D."/>
            <person name="Wan K.H."/>
            <person name="Doyle C."/>
            <person name="Baxter E.G."/>
            <person name="Helt G."/>
            <person name="Nelson C.R."/>
            <person name="Miklos G.L.G."/>
            <person name="Abril J.F."/>
            <person name="Agbayani A."/>
            <person name="An H.-J."/>
            <person name="Andrews-Pfannkoch C."/>
            <person name="Baldwin D."/>
            <person name="Ballew R.M."/>
            <person name="Basu A."/>
            <person name="Baxendale J."/>
            <person name="Bayraktaroglu L."/>
            <person name="Beasley E.M."/>
            <person name="Beeson K.Y."/>
            <person name="Benos P.V."/>
            <person name="Berman B.P."/>
            <person name="Bhandari D."/>
            <person name="Bolshakov S."/>
            <person name="Borkova D."/>
            <person name="Botchan M.R."/>
            <person name="Bouck J."/>
            <person name="Brokstein P."/>
            <person name="Brottier P."/>
            <person name="Burtis K.C."/>
            <person name="Busam D.A."/>
            <person name="Butler H."/>
            <person name="Cadieu E."/>
            <person name="Center A."/>
            <person name="Chandra I."/>
            <person name="Cherry J.M."/>
            <person name="Cawley S."/>
            <person name="Dahlke C."/>
            <person name="Davenport L.B."/>
            <person name="Davies P."/>
            <person name="de Pablos B."/>
            <person name="Delcher A."/>
            <person name="Deng Z."/>
            <person name="Mays A.D."/>
            <person name="Dew I."/>
            <person name="Dietz S.M."/>
            <person name="Dodson K."/>
            <person name="Doup L.E."/>
            <person name="Downes M."/>
            <person name="Dugan-Rocha S."/>
            <person name="Dunkov B.C."/>
            <person name="Dunn P."/>
            <person name="Durbin K.J."/>
            <person name="Evangelista C.C."/>
            <person name="Ferraz C."/>
            <person name="Ferriera S."/>
            <person name="Fleischmann W."/>
            <person name="Fosler C."/>
            <person name="Gabrielian A.E."/>
            <person name="Garg N.S."/>
            <person name="Gelbart W.M."/>
            <person name="Glasser K."/>
            <person name="Glodek A."/>
            <person name="Gong F."/>
            <person name="Gorrell J.H."/>
            <person name="Gu Z."/>
            <person name="Guan P."/>
            <person name="Harris M."/>
            <person name="Harris N.L."/>
            <person name="Harvey D.A."/>
            <person name="Heiman T.J."/>
            <person name="Hernandez J.R."/>
            <person name="Houck J."/>
            <person name="Hostin D."/>
            <person name="Houston K.A."/>
            <person name="Howland T.J."/>
            <person name="Wei M.-H."/>
            <person name="Ibegwam C."/>
            <person name="Jalali M."/>
            <person name="Kalush F."/>
            <person name="Karpen G.H."/>
            <person name="Ke Z."/>
            <person name="Kennison J.A."/>
            <person name="Ketchum K.A."/>
            <person name="Kimmel B.E."/>
            <person name="Kodira C.D."/>
            <person name="Kraft C.L."/>
            <person name="Kravitz S."/>
            <person name="Kulp D."/>
            <person name="Lai Z."/>
            <person name="Lasko P."/>
            <person name="Lei Y."/>
            <person name="Levitsky A.A."/>
            <person name="Li J.H."/>
            <person name="Li Z."/>
            <person name="Liang Y."/>
            <person name="Lin X."/>
            <person name="Liu X."/>
            <person name="Mattei B."/>
            <person name="McIntosh T.C."/>
            <person name="McLeod M.P."/>
            <person name="McPherson D."/>
            <person name="Merkulov G."/>
            <person name="Milshina N.V."/>
            <person name="Mobarry C."/>
            <person name="Morris J."/>
            <person name="Moshrefi A."/>
            <person name="Mount S.M."/>
            <person name="Moy M."/>
            <person name="Murphy B."/>
            <person name="Murphy L."/>
            <person name="Muzny D.M."/>
            <person name="Nelson D.L."/>
            <person name="Nelson D.R."/>
            <person name="Nelson K.A."/>
            <person name="Nixon K."/>
            <person name="Nusskern D.R."/>
            <person name="Pacleb J.M."/>
            <person name="Palazzolo M."/>
            <person name="Pittman G.S."/>
            <person name="Pan S."/>
            <person name="Pollard J."/>
            <person name="Puri V."/>
            <person name="Reese M.G."/>
            <person name="Reinert K."/>
            <person name="Remington K."/>
            <person name="Saunders R.D.C."/>
            <person name="Scheeler F."/>
            <person name="Shen H."/>
            <person name="Shue B.C."/>
            <person name="Siden-Kiamos I."/>
            <person name="Simpson M."/>
            <person name="Skupski M.P."/>
            <person name="Smith T.J."/>
            <person name="Spier E."/>
            <person name="Spradling A.C."/>
            <person name="Stapleton M."/>
            <person name="Strong R."/>
            <person name="Sun E."/>
            <person name="Svirskas R."/>
            <person name="Tector C."/>
            <person name="Turner R."/>
            <person name="Venter E."/>
            <person name="Wang A.H."/>
            <person name="Wang X."/>
            <person name="Wang Z.-Y."/>
            <person name="Wassarman D.A."/>
            <person name="Weinstock G.M."/>
            <person name="Weissenbach J."/>
            <person name="Williams S.M."/>
            <person name="Woodage T."/>
            <person name="Worley K.C."/>
            <person name="Wu D."/>
            <person name="Yang S."/>
            <person name="Yao Q.A."/>
            <person name="Ye J."/>
            <person name="Yeh R.-F."/>
            <person name="Zaveri J.S."/>
            <person name="Zhan M."/>
            <person name="Zhang G."/>
            <person name="Zhao Q."/>
            <person name="Zheng L."/>
            <person name="Zheng X.H."/>
            <person name="Zhong F.N."/>
            <person name="Zhong W."/>
            <person name="Zhou X."/>
            <person name="Zhu S.C."/>
            <person name="Zhu X."/>
            <person name="Smith H.O."/>
            <person name="Gibbs R.A."/>
            <person name="Myers E.W."/>
            <person name="Rubin G.M."/>
            <person name="Venter J.C."/>
        </authorList>
    </citation>
    <scope>NUCLEOTIDE SEQUENCE [LARGE SCALE GENOMIC DNA]</scope>
    <source>
        <strain>Berkeley</strain>
    </source>
</reference>
<reference key="3">
    <citation type="journal article" date="2002" name="Genome Biol.">
        <title>Annotation of the Drosophila melanogaster euchromatic genome: a systematic review.</title>
        <authorList>
            <person name="Misra S."/>
            <person name="Crosby M.A."/>
            <person name="Mungall C.J."/>
            <person name="Matthews B.B."/>
            <person name="Campbell K.S."/>
            <person name="Hradecky P."/>
            <person name="Huang Y."/>
            <person name="Kaminker J.S."/>
            <person name="Millburn G.H."/>
            <person name="Prochnik S.E."/>
            <person name="Smith C.D."/>
            <person name="Tupy J.L."/>
            <person name="Whitfield E.J."/>
            <person name="Bayraktaroglu L."/>
            <person name="Berman B.P."/>
            <person name="Bettencourt B.R."/>
            <person name="Celniker S.E."/>
            <person name="de Grey A.D.N.J."/>
            <person name="Drysdale R.A."/>
            <person name="Harris N.L."/>
            <person name="Richter J."/>
            <person name="Russo S."/>
            <person name="Schroeder A.J."/>
            <person name="Shu S.Q."/>
            <person name="Stapleton M."/>
            <person name="Yamada C."/>
            <person name="Ashburner M."/>
            <person name="Gelbart W.M."/>
            <person name="Rubin G.M."/>
            <person name="Lewis S.E."/>
        </authorList>
    </citation>
    <scope>GENOME REANNOTATION</scope>
    <source>
        <strain>Berkeley</strain>
    </source>
</reference>
<reference key="4">
    <citation type="journal article" date="2002" name="Genome Biol.">
        <title>A Drosophila full-length cDNA resource.</title>
        <authorList>
            <person name="Stapleton M."/>
            <person name="Carlson J.W."/>
            <person name="Brokstein P."/>
            <person name="Yu C."/>
            <person name="Champe M."/>
            <person name="George R.A."/>
            <person name="Guarin H."/>
            <person name="Kronmiller B."/>
            <person name="Pacleb J.M."/>
            <person name="Park S."/>
            <person name="Wan K.H."/>
            <person name="Rubin G.M."/>
            <person name="Celniker S.E."/>
        </authorList>
    </citation>
    <scope>NUCLEOTIDE SEQUENCE [LARGE SCALE MRNA]</scope>
    <source>
        <strain>Berkeley</strain>
        <tissue>Embryo</tissue>
    </source>
</reference>
<reference key="5">
    <citation type="journal article" date="1984" name="EMBO J.">
        <title>Drosophila maternal and embryo mRNAs transcribed from a single transcription unit use alternate combinations of exons.</title>
        <authorList>
            <person name="Vincent A."/>
            <person name="O'Connell P."/>
            <person name="Gray M.R."/>
            <person name="Rosbash M."/>
        </authorList>
    </citation>
    <scope>NUCLEOTIDE SEQUENCE [GENOMIC DNA] OF 339-433</scope>
    <scope>DEVELOPMENTAL STAGE</scope>
</reference>
<reference key="6">
    <citation type="journal article" date="1990" name="Development">
        <title>The closely related Drosophila sry beta and sry delta zinc finger proteins show differential embryonic expression and distinct patterns of binding sites on polytene chromosomes.</title>
        <authorList>
            <person name="Payre F."/>
            <person name="Noselli S."/>
            <person name="Lefrere V."/>
            <person name="Vincent A."/>
        </authorList>
    </citation>
    <scope>DNA-BINDING</scope>
    <scope>SUBCELLULAR LOCATION</scope>
    <scope>TISSUE SPECIFICITY</scope>
    <scope>DEVELOPMENTAL STAGE</scope>
</reference>
<reference key="7">
    <citation type="journal article" date="1991" name="FEBS Lett.">
        <title>A Drosophila nuclear localisation signal included in an 18 amino acid fragment from the serendipity delta zinc finger protein.</title>
        <authorList>
            <person name="Noselli S."/>
            <person name="Vincent A."/>
        </authorList>
    </citation>
    <scope>NUCLEAR LOCALIZATION SIGNAL</scope>
</reference>
<reference key="8">
    <citation type="journal article" date="1991" name="EMBO J.">
        <title>Genomic targets of the serendipity beta and delta zinc finger proteins and their respective DNA recognition sites.</title>
        <authorList>
            <person name="Payre F."/>
            <person name="Vincent A."/>
        </authorList>
    </citation>
    <scope>DNA-BINDING SPECIFICITY</scope>
</reference>
<reference key="9">
    <citation type="journal article" date="1997" name="Mol. Cell. Biol.">
        <title>Two types of zinc fingers are required for dimerization of the serendipity delta transcriptional activator.</title>
        <authorList>
            <person name="Payre F."/>
            <person name="Buono P."/>
            <person name="Vanzo N."/>
            <person name="Vincent A."/>
        </authorList>
    </citation>
    <scope>FUNCTION</scope>
    <scope>DNA-BINDING</scope>
    <scope>HOMODIMERIZATION</scope>
</reference>
<reference key="10">
    <citation type="journal article" date="1998" name="Mech. Dev.">
        <title>Transcriptional control of Drosophila bicoid by Serendipity delta: cooperative binding sites, promoter context, and co-evolution.</title>
        <authorList>
            <person name="Ruez C."/>
            <person name="Payre F."/>
            <person name="Vincent A."/>
        </authorList>
    </citation>
    <scope>FUNCTION</scope>
    <scope>DNA-BINDING</scope>
</reference>
<reference evidence="12" key="11">
    <citation type="journal article" date="2022" name="Structure">
        <title>Structural insights into highly similar spatial organization of zinc-finger associated domains with a very low sequence similarity.</title>
        <authorList>
            <person name="Bonchuk A.N."/>
            <person name="Boyko K.M."/>
            <person name="Nikolaeva A.Y."/>
            <person name="Burtseva A.D."/>
            <person name="Popov V.O."/>
            <person name="Georgiev P.G."/>
        </authorList>
    </citation>
    <scope>X-RAY CRYSTALLOGRAPHY (2.85 ANGSTROMS) OF 1-90 IN COMPLEX WITH ZN(2+)</scope>
    <scope>SUBUNIT</scope>
    <scope>ZAD DOMAIN</scope>
</reference>
<sequence>MDTCFFCGAVDLSDTGSSSSMRYETLSAKVPSSQKTVSLVLTHLANCIQTQLDLKPGARLCPRCFQELSDYDTIMVNLMTTQKRLTTQLKGALKSEFEVPESGEDILVEEVEIPQSDVETDADAEADALFVELVKDQEESDTEIKREFVDEEEEEDDDDDDEFICEDVDVGDSEALYGKSSDGEDRPTKKRVKQECTTCGKVYNSWYQLQKHISEEHSKQPNHICPICGVIRRDEEYLELHMNLHEGKTEKQCRYCPKSFSRPVNTLRHMRMHWDKKKYQCEKCGLRFSQDNLLYNHRLRHEAEENPIICSICNVSFKSRKTFNHHTLIHKENRPRHYCSVCPKSFTERYTLKMHMKTHEGDVVYGVREEAPADEQQVVEELHVDVDESEAAVTVIMSDNDENSGFCLICNTNFENKKELEHHLQFDHDVVLK</sequence>
<accession>P07664</accession>
<accession>Q9VAB3</accession>
<protein>
    <recommendedName>
        <fullName>Serendipity locus protein delta</fullName>
        <shortName evidence="10">Serendipity-delta</shortName>
    </recommendedName>
</protein>
<dbReference type="EMBL" id="X03121">
    <property type="protein sequence ID" value="CAA26898.1"/>
    <property type="molecule type" value="Genomic_DNA"/>
</dbReference>
<dbReference type="EMBL" id="AE014297">
    <property type="protein sequence ID" value="AAF57000.1"/>
    <property type="molecule type" value="Genomic_DNA"/>
</dbReference>
<dbReference type="EMBL" id="AY069691">
    <property type="protein sequence ID" value="AAL39836.1"/>
    <property type="molecule type" value="mRNA"/>
</dbReference>
<dbReference type="EMBL" id="X00555">
    <property type="protein sequence ID" value="CAA25221.1"/>
    <property type="molecule type" value="Genomic_DNA"/>
</dbReference>
<dbReference type="PIR" id="C23351">
    <property type="entry name" value="C23351"/>
</dbReference>
<dbReference type="RefSeq" id="NP_524581.1">
    <property type="nucleotide sequence ID" value="NM_079842.3"/>
</dbReference>
<dbReference type="PDB" id="7POH">
    <property type="method" value="X-ray"/>
    <property type="resolution" value="2.85 A"/>
    <property type="chains" value="A/B=1-90"/>
</dbReference>
<dbReference type="PDBsum" id="7POH"/>
<dbReference type="SMR" id="P07664"/>
<dbReference type="BioGRID" id="68428">
    <property type="interactions" value="10"/>
</dbReference>
<dbReference type="FunCoup" id="P07664">
    <property type="interactions" value="352"/>
</dbReference>
<dbReference type="IntAct" id="P07664">
    <property type="interactions" value="8"/>
</dbReference>
<dbReference type="STRING" id="7227.FBpp0084924"/>
<dbReference type="PaxDb" id="7227-FBpp0084924"/>
<dbReference type="DNASU" id="43572"/>
<dbReference type="EnsemblMetazoa" id="FBtr0085558">
    <property type="protein sequence ID" value="FBpp0084924"/>
    <property type="gene ID" value="FBgn0003512"/>
</dbReference>
<dbReference type="GeneID" id="43572"/>
<dbReference type="KEGG" id="dme:Dmel_CG17958"/>
<dbReference type="AGR" id="FB:FBgn0003512"/>
<dbReference type="CTD" id="43572"/>
<dbReference type="FlyBase" id="FBgn0003512">
    <property type="gene designation" value="Sry-delta"/>
</dbReference>
<dbReference type="VEuPathDB" id="VectorBase:FBgn0003512"/>
<dbReference type="eggNOG" id="KOG1721">
    <property type="taxonomic scope" value="Eukaryota"/>
</dbReference>
<dbReference type="GeneTree" id="ENSGT00940000164700"/>
<dbReference type="HOGENOM" id="CLU_776751_0_0_1"/>
<dbReference type="InParanoid" id="P07664"/>
<dbReference type="OMA" id="HINEDHS"/>
<dbReference type="OrthoDB" id="6077919at2759"/>
<dbReference type="PhylomeDB" id="P07664"/>
<dbReference type="BioGRID-ORCS" id="43572">
    <property type="hits" value="0 hits in 1 CRISPR screen"/>
</dbReference>
<dbReference type="GenomeRNAi" id="43572"/>
<dbReference type="PRO" id="PR:P07664"/>
<dbReference type="Proteomes" id="UP000000803">
    <property type="component" value="Chromosome 3R"/>
</dbReference>
<dbReference type="Bgee" id="FBgn0003512">
    <property type="expression patterns" value="Expressed in T neuron T4a (Drosophila) in embryonic/larval optic lobe (Drosophila) and 55 other cell types or tissues"/>
</dbReference>
<dbReference type="GO" id="GO:0005829">
    <property type="term" value="C:cytosol"/>
    <property type="evidence" value="ECO:0000314"/>
    <property type="project" value="FlyBase"/>
</dbReference>
<dbReference type="GO" id="GO:0005634">
    <property type="term" value="C:nucleus"/>
    <property type="evidence" value="ECO:0000314"/>
    <property type="project" value="UniProtKB"/>
</dbReference>
<dbReference type="GO" id="GO:0005705">
    <property type="term" value="C:polytene chromosome interband"/>
    <property type="evidence" value="ECO:0000314"/>
    <property type="project" value="UniProtKB"/>
</dbReference>
<dbReference type="GO" id="GO:0003677">
    <property type="term" value="F:DNA binding"/>
    <property type="evidence" value="ECO:0000314"/>
    <property type="project" value="UniProtKB"/>
</dbReference>
<dbReference type="GO" id="GO:0001228">
    <property type="term" value="F:DNA-binding transcription activator activity, RNA polymerase II-specific"/>
    <property type="evidence" value="ECO:0000314"/>
    <property type="project" value="FlyBase"/>
</dbReference>
<dbReference type="GO" id="GO:0000981">
    <property type="term" value="F:DNA-binding transcription factor activity, RNA polymerase II-specific"/>
    <property type="evidence" value="ECO:0000318"/>
    <property type="project" value="GO_Central"/>
</dbReference>
<dbReference type="GO" id="GO:0000977">
    <property type="term" value="F:RNA polymerase II transcription regulatory region sequence-specific DNA binding"/>
    <property type="evidence" value="ECO:0000318"/>
    <property type="project" value="GO_Central"/>
</dbReference>
<dbReference type="GO" id="GO:0008270">
    <property type="term" value="F:zinc ion binding"/>
    <property type="evidence" value="ECO:0007669"/>
    <property type="project" value="UniProtKB-KW"/>
</dbReference>
<dbReference type="GO" id="GO:0008595">
    <property type="term" value="P:anterior/posterior axis specification, embryo"/>
    <property type="evidence" value="ECO:0000315"/>
    <property type="project" value="FlyBase"/>
</dbReference>
<dbReference type="GO" id="GO:0045450">
    <property type="term" value="P:bicoid mRNA localization"/>
    <property type="evidence" value="ECO:0000315"/>
    <property type="project" value="UniProtKB"/>
</dbReference>
<dbReference type="GO" id="GO:0048477">
    <property type="term" value="P:oogenesis"/>
    <property type="evidence" value="ECO:0000316"/>
    <property type="project" value="FlyBase"/>
</dbReference>
<dbReference type="GO" id="GO:0045944">
    <property type="term" value="P:positive regulation of transcription by RNA polymerase II"/>
    <property type="evidence" value="ECO:0000314"/>
    <property type="project" value="FlyBase"/>
</dbReference>
<dbReference type="GO" id="GO:0006357">
    <property type="term" value="P:regulation of transcription by RNA polymerase II"/>
    <property type="evidence" value="ECO:0000318"/>
    <property type="project" value="GO_Central"/>
</dbReference>
<dbReference type="GO" id="GO:0019953">
    <property type="term" value="P:sexual reproduction"/>
    <property type="evidence" value="ECO:0000270"/>
    <property type="project" value="FlyBase"/>
</dbReference>
<dbReference type="FunFam" id="3.30.160.60:FF:004916">
    <property type="match status" value="1"/>
</dbReference>
<dbReference type="Gene3D" id="3.30.160.60">
    <property type="entry name" value="Classic Zinc Finger"/>
    <property type="match status" value="4"/>
</dbReference>
<dbReference type="InterPro" id="IPR036236">
    <property type="entry name" value="Znf_C2H2_sf"/>
</dbReference>
<dbReference type="InterPro" id="IPR013087">
    <property type="entry name" value="Znf_C2H2_type"/>
</dbReference>
<dbReference type="PANTHER" id="PTHR24379:SF121">
    <property type="entry name" value="C2H2-TYPE DOMAIN-CONTAINING PROTEIN"/>
    <property type="match status" value="1"/>
</dbReference>
<dbReference type="PANTHER" id="PTHR24379">
    <property type="entry name" value="KRAB AND ZINC FINGER DOMAIN-CONTAINING"/>
    <property type="match status" value="1"/>
</dbReference>
<dbReference type="Pfam" id="PF00096">
    <property type="entry name" value="zf-C2H2"/>
    <property type="match status" value="4"/>
</dbReference>
<dbReference type="Pfam" id="PF12874">
    <property type="entry name" value="zf-met"/>
    <property type="match status" value="1"/>
</dbReference>
<dbReference type="SMART" id="SM00355">
    <property type="entry name" value="ZnF_C2H2"/>
    <property type="match status" value="7"/>
</dbReference>
<dbReference type="SUPFAM" id="SSF57667">
    <property type="entry name" value="beta-beta-alpha zinc fingers"/>
    <property type="match status" value="3"/>
</dbReference>
<dbReference type="PROSITE" id="PS00028">
    <property type="entry name" value="ZINC_FINGER_C2H2_1"/>
    <property type="match status" value="6"/>
</dbReference>
<dbReference type="PROSITE" id="PS50157">
    <property type="entry name" value="ZINC_FINGER_C2H2_2"/>
    <property type="match status" value="6"/>
</dbReference>
<feature type="chain" id="PRO_0000047050" description="Serendipity locus protein delta">
    <location>
        <begin position="1"/>
        <end position="433"/>
    </location>
</feature>
<feature type="domain" description="ZAD" evidence="5">
    <location>
        <begin position="1"/>
        <end position="90"/>
    </location>
</feature>
<feature type="zinc finger region" description="C2H2-type 1" evidence="1">
    <location>
        <begin position="194"/>
        <end position="217"/>
    </location>
</feature>
<feature type="zinc finger region" description="C2H2-type 2" evidence="1">
    <location>
        <begin position="223"/>
        <end position="245"/>
    </location>
</feature>
<feature type="zinc finger region" description="C2H2-type 3" evidence="1">
    <location>
        <begin position="251"/>
        <end position="273"/>
    </location>
</feature>
<feature type="zinc finger region" description="C2H2-type 4" evidence="1">
    <location>
        <begin position="279"/>
        <end position="301"/>
    </location>
</feature>
<feature type="zinc finger region" description="C2H2-type 5" evidence="1">
    <location>
        <begin position="308"/>
        <end position="330"/>
    </location>
</feature>
<feature type="zinc finger region" description="C2H2-type 6" evidence="1">
    <location>
        <begin position="337"/>
        <end position="359"/>
    </location>
</feature>
<feature type="zinc finger region" description="C2H2-type 7" evidence="1">
    <location>
        <begin position="405"/>
        <end position="428"/>
    </location>
</feature>
<feature type="region of interest" description="Disordered" evidence="2">
    <location>
        <begin position="141"/>
        <end position="162"/>
    </location>
</feature>
<feature type="short sequence motif" description="Nuclear localization signal" evidence="3">
    <location>
        <begin position="187"/>
        <end position="193"/>
    </location>
</feature>
<feature type="compositionally biased region" description="Acidic residues" evidence="2">
    <location>
        <begin position="149"/>
        <end position="162"/>
    </location>
</feature>
<feature type="binding site" evidence="12">
    <location>
        <position position="4"/>
    </location>
    <ligand>
        <name>Zn(2+)</name>
        <dbReference type="ChEBI" id="CHEBI:29105"/>
    </ligand>
</feature>
<feature type="binding site" evidence="12">
    <location>
        <position position="7"/>
    </location>
    <ligand>
        <name>Zn(2+)</name>
        <dbReference type="ChEBI" id="CHEBI:29105"/>
    </ligand>
</feature>
<feature type="binding site" evidence="12">
    <location>
        <position position="61"/>
    </location>
    <ligand>
        <name>Zn(2+)</name>
        <dbReference type="ChEBI" id="CHEBI:29105"/>
    </ligand>
</feature>
<feature type="binding site" evidence="12">
    <location>
        <position position="64"/>
    </location>
    <ligand>
        <name>Zn(2+)</name>
        <dbReference type="ChEBI" id="CHEBI:29105"/>
    </ligand>
</feature>
<feature type="sequence conflict" description="In Ref. 1; CAA26898." evidence="11" ref="1">
    <location>
        <position position="62"/>
    </location>
</feature>
<feature type="sequence conflict" description="In Ref. 1; CAA26898." evidence="11" ref="1">
    <original>M</original>
    <variation>S</variation>
    <location>
        <position position="272"/>
    </location>
</feature>
<feature type="sequence conflict" description="In Ref. 1 and 5." evidence="11" ref="1 5">
    <original>V</original>
    <variation>F</variation>
    <location>
        <position position="393"/>
    </location>
</feature>
<feature type="sequence conflict" description="In Ref. 1 and 5." evidence="11" ref="1 5">
    <original>N</original>
    <variation>T</variation>
    <location>
        <position position="413"/>
    </location>
</feature>
<feature type="sequence conflict" description="In Ref. 1 and 5." evidence="11" ref="1 5">
    <original>VLK</original>
    <variation>S</variation>
    <location>
        <begin position="431"/>
        <end position="433"/>
    </location>
</feature>
<feature type="strand" evidence="13">
    <location>
        <begin position="2"/>
        <end position="4"/>
    </location>
</feature>
<feature type="turn" evidence="13">
    <location>
        <begin position="31"/>
        <end position="33"/>
    </location>
</feature>
<feature type="helix" evidence="13">
    <location>
        <begin position="37"/>
        <end position="47"/>
    </location>
</feature>
<feature type="helix" evidence="13">
    <location>
        <begin position="62"/>
        <end position="90"/>
    </location>
</feature>
<keyword id="KW-0002">3D-structure</keyword>
<keyword id="KW-0010">Activator</keyword>
<keyword id="KW-0217">Developmental protein</keyword>
<keyword id="KW-0238">DNA-binding</keyword>
<keyword id="KW-0479">Metal-binding</keyword>
<keyword id="KW-0539">Nucleus</keyword>
<keyword id="KW-1185">Reference proteome</keyword>
<keyword id="KW-0677">Repeat</keyword>
<keyword id="KW-0804">Transcription</keyword>
<keyword id="KW-0805">Transcription regulation</keyword>
<keyword id="KW-0862">Zinc</keyword>
<keyword id="KW-0863">Zinc-finger</keyword>
<comment type="function">
    <text evidence="8 9">Transcriptional activator that controls bicoid gene expression during oogenesis. Found in transcriptionally active cells. Binds to specific sites on polytene chromosomes of third instar larvae. Binds to the consensus DNA sequence 5'-YTAGAGATGGRAA-3'.</text>
</comment>
<comment type="subunit">
    <text evidence="5">Homodimer (via ZAD domain) in solution (PubMed:35580610). Binds DNA as a homodimer. N-terminal regions of the protein are required, in addition to the zinc fingers, for the specificity of chromatin-binding.</text>
</comment>
<comment type="interaction">
    <interactant intactId="EBI-498092">
        <id>P07664</id>
    </interactant>
    <interactant intactId="EBI-134484">
        <id>Q7JN06</id>
        <label>BEAF-32</label>
    </interactant>
    <organismsDiffer>false</organismsDiffer>
    <experiments>5</experiments>
</comment>
<comment type="interaction">
    <interactant intactId="EBI-498092">
        <id>P07664</id>
    </interactant>
    <interactant intactId="EBI-366851">
        <id>Q94513</id>
        <label>BEAF-32</label>
    </interactant>
    <organismsDiffer>false</organismsDiffer>
    <experiments>3</experiments>
</comment>
<comment type="subcellular location">
    <subcellularLocation>
        <location evidence="4">Nucleus</location>
    </subcellularLocation>
</comment>
<comment type="tissue specificity">
    <text evidence="4">Predominantly localized to the sub- and supraesophagal ganglia and the ventral nerve cord in the embryo, after dorsal closure.</text>
</comment>
<comment type="developmental stage">
    <text evidence="4 6 7">Expressed both maternally and zygotically. Found in ovaries and abundant in early embryos. Also found in variable amounts at every stage of the life cycle.</text>
</comment>
<gene>
    <name type="primary">Sry-delta</name>
    <name type="synonym">Sry-d</name>
    <name type="ORF">CG17958</name>
</gene>
<evidence type="ECO:0000255" key="1">
    <source>
        <dbReference type="PROSITE-ProRule" id="PRU00042"/>
    </source>
</evidence>
<evidence type="ECO:0000256" key="2">
    <source>
        <dbReference type="SAM" id="MobiDB-lite"/>
    </source>
</evidence>
<evidence type="ECO:0000269" key="3">
    <source>
    </source>
</evidence>
<evidence type="ECO:0000269" key="4">
    <source>
    </source>
</evidence>
<evidence type="ECO:0000269" key="5">
    <source>
    </source>
</evidence>
<evidence type="ECO:0000269" key="6">
    <source>
    </source>
</evidence>
<evidence type="ECO:0000269" key="7">
    <source>
    </source>
</evidence>
<evidence type="ECO:0000269" key="8">
    <source>
    </source>
</evidence>
<evidence type="ECO:0000269" key="9">
    <source>
    </source>
</evidence>
<evidence type="ECO:0000303" key="10">
    <source>
    </source>
</evidence>
<evidence type="ECO:0000305" key="11"/>
<evidence type="ECO:0007744" key="12">
    <source>
        <dbReference type="PDB" id="7POH"/>
    </source>
</evidence>
<evidence type="ECO:0007829" key="13">
    <source>
        <dbReference type="PDB" id="7POH"/>
    </source>
</evidence>
<name>SRYD_DROME</name>
<organism>
    <name type="scientific">Drosophila melanogaster</name>
    <name type="common">Fruit fly</name>
    <dbReference type="NCBI Taxonomy" id="7227"/>
    <lineage>
        <taxon>Eukaryota</taxon>
        <taxon>Metazoa</taxon>
        <taxon>Ecdysozoa</taxon>
        <taxon>Arthropoda</taxon>
        <taxon>Hexapoda</taxon>
        <taxon>Insecta</taxon>
        <taxon>Pterygota</taxon>
        <taxon>Neoptera</taxon>
        <taxon>Endopterygota</taxon>
        <taxon>Diptera</taxon>
        <taxon>Brachycera</taxon>
        <taxon>Muscomorpha</taxon>
        <taxon>Ephydroidea</taxon>
        <taxon>Drosophilidae</taxon>
        <taxon>Drosophila</taxon>
        <taxon>Sophophora</taxon>
    </lineage>
</organism>
<proteinExistence type="evidence at protein level"/>